<evidence type="ECO:0000255" key="1">
    <source>
        <dbReference type="HAMAP-Rule" id="MF_00406"/>
    </source>
</evidence>
<protein>
    <recommendedName>
        <fullName evidence="1">3-hydroxyacyl-[acyl-carrier-protein] dehydratase FabZ</fullName>
        <ecNumber evidence="1">4.2.1.59</ecNumber>
    </recommendedName>
    <alternativeName>
        <fullName evidence="1">(3R)-hydroxymyristoyl-[acyl-carrier-protein] dehydratase</fullName>
        <shortName evidence="1">(3R)-hydroxymyristoyl-ACP dehydrase</shortName>
    </alternativeName>
    <alternativeName>
        <fullName evidence="1">Beta-hydroxyacyl-ACP dehydratase</fullName>
    </alternativeName>
</protein>
<sequence length="144" mass="15894">MDFGVQDIKNIIPHRYPFLLIDRVSYIEPGKKVVAYKNVTSNEYFFQGHFPEMPVMPGVLIIEALAQAGAVAILSQEEFKGKIAFFGAINKAKFRRNVVPGDTLKLEVEIIKIKGSAGIGKGTAYIGEKKAAEGELMFMIGDKN</sequence>
<comment type="function">
    <text evidence="1">Involved in unsaturated fatty acids biosynthesis. Catalyzes the dehydration of short chain beta-hydroxyacyl-ACPs and long chain saturated and unsaturated beta-hydroxyacyl-ACPs.</text>
</comment>
<comment type="catalytic activity">
    <reaction evidence="1">
        <text>a (3R)-hydroxyacyl-[ACP] = a (2E)-enoyl-[ACP] + H2O</text>
        <dbReference type="Rhea" id="RHEA:13097"/>
        <dbReference type="Rhea" id="RHEA-COMP:9925"/>
        <dbReference type="Rhea" id="RHEA-COMP:9945"/>
        <dbReference type="ChEBI" id="CHEBI:15377"/>
        <dbReference type="ChEBI" id="CHEBI:78784"/>
        <dbReference type="ChEBI" id="CHEBI:78827"/>
        <dbReference type="EC" id="4.2.1.59"/>
    </reaction>
</comment>
<comment type="subcellular location">
    <subcellularLocation>
        <location evidence="1">Cytoplasm</location>
    </subcellularLocation>
</comment>
<comment type="similarity">
    <text evidence="1">Belongs to the thioester dehydratase family. FabZ subfamily.</text>
</comment>
<dbReference type="EC" id="4.2.1.59" evidence="1"/>
<dbReference type="EMBL" id="AP009049">
    <property type="protein sequence ID" value="BAH05136.1"/>
    <property type="molecule type" value="Genomic_DNA"/>
</dbReference>
<dbReference type="SMR" id="B9DY11"/>
<dbReference type="KEGG" id="ckr:CKR_0085"/>
<dbReference type="HOGENOM" id="CLU_078912_3_0_9"/>
<dbReference type="Proteomes" id="UP000007969">
    <property type="component" value="Chromosome"/>
</dbReference>
<dbReference type="GO" id="GO:0005737">
    <property type="term" value="C:cytoplasm"/>
    <property type="evidence" value="ECO:0007669"/>
    <property type="project" value="UniProtKB-SubCell"/>
</dbReference>
<dbReference type="GO" id="GO:0016020">
    <property type="term" value="C:membrane"/>
    <property type="evidence" value="ECO:0007669"/>
    <property type="project" value="GOC"/>
</dbReference>
<dbReference type="GO" id="GO:0019171">
    <property type="term" value="F:(3R)-hydroxyacyl-[acyl-carrier-protein] dehydratase activity"/>
    <property type="evidence" value="ECO:0007669"/>
    <property type="project" value="UniProtKB-EC"/>
</dbReference>
<dbReference type="GO" id="GO:0006633">
    <property type="term" value="P:fatty acid biosynthetic process"/>
    <property type="evidence" value="ECO:0007669"/>
    <property type="project" value="UniProtKB-UniRule"/>
</dbReference>
<dbReference type="GO" id="GO:0009245">
    <property type="term" value="P:lipid A biosynthetic process"/>
    <property type="evidence" value="ECO:0007669"/>
    <property type="project" value="UniProtKB-UniRule"/>
</dbReference>
<dbReference type="CDD" id="cd01288">
    <property type="entry name" value="FabZ"/>
    <property type="match status" value="1"/>
</dbReference>
<dbReference type="FunFam" id="3.10.129.10:FF:000001">
    <property type="entry name" value="3-hydroxyacyl-[acyl-carrier-protein] dehydratase FabZ"/>
    <property type="match status" value="1"/>
</dbReference>
<dbReference type="Gene3D" id="3.10.129.10">
    <property type="entry name" value="Hotdog Thioesterase"/>
    <property type="match status" value="1"/>
</dbReference>
<dbReference type="HAMAP" id="MF_00406">
    <property type="entry name" value="FabZ"/>
    <property type="match status" value="1"/>
</dbReference>
<dbReference type="InterPro" id="IPR013114">
    <property type="entry name" value="FabA_FabZ"/>
</dbReference>
<dbReference type="InterPro" id="IPR010084">
    <property type="entry name" value="FabZ"/>
</dbReference>
<dbReference type="InterPro" id="IPR029069">
    <property type="entry name" value="HotDog_dom_sf"/>
</dbReference>
<dbReference type="NCBIfam" id="TIGR01750">
    <property type="entry name" value="fabZ"/>
    <property type="match status" value="1"/>
</dbReference>
<dbReference type="NCBIfam" id="NF000582">
    <property type="entry name" value="PRK00006.1"/>
    <property type="match status" value="1"/>
</dbReference>
<dbReference type="PANTHER" id="PTHR30272">
    <property type="entry name" value="3-HYDROXYACYL-[ACYL-CARRIER-PROTEIN] DEHYDRATASE"/>
    <property type="match status" value="1"/>
</dbReference>
<dbReference type="PANTHER" id="PTHR30272:SF1">
    <property type="entry name" value="3-HYDROXYACYL-[ACYL-CARRIER-PROTEIN] DEHYDRATASE"/>
    <property type="match status" value="1"/>
</dbReference>
<dbReference type="Pfam" id="PF07977">
    <property type="entry name" value="FabA"/>
    <property type="match status" value="1"/>
</dbReference>
<dbReference type="SUPFAM" id="SSF54637">
    <property type="entry name" value="Thioesterase/thiol ester dehydrase-isomerase"/>
    <property type="match status" value="1"/>
</dbReference>
<accession>B9DY11</accession>
<name>FABZ_CLOK1</name>
<proteinExistence type="inferred from homology"/>
<organism>
    <name type="scientific">Clostridium kluyveri (strain NBRC 12016)</name>
    <dbReference type="NCBI Taxonomy" id="583346"/>
    <lineage>
        <taxon>Bacteria</taxon>
        <taxon>Bacillati</taxon>
        <taxon>Bacillota</taxon>
        <taxon>Clostridia</taxon>
        <taxon>Eubacteriales</taxon>
        <taxon>Clostridiaceae</taxon>
        <taxon>Clostridium</taxon>
    </lineage>
</organism>
<feature type="chain" id="PRO_1000134698" description="3-hydroxyacyl-[acyl-carrier-protein] dehydratase FabZ">
    <location>
        <begin position="1"/>
        <end position="144"/>
    </location>
</feature>
<feature type="active site" evidence="1">
    <location>
        <position position="49"/>
    </location>
</feature>
<reference key="1">
    <citation type="submission" date="2005-09" db="EMBL/GenBank/DDBJ databases">
        <title>Complete genome sequence of Clostridium kluyveri and comparative genomics of Clostridia species.</title>
        <authorList>
            <person name="Inui M."/>
            <person name="Nonaka H."/>
            <person name="Shinoda Y."/>
            <person name="Ikenaga Y."/>
            <person name="Abe M."/>
            <person name="Naito K."/>
            <person name="Vertes A.A."/>
            <person name="Yukawa H."/>
        </authorList>
    </citation>
    <scope>NUCLEOTIDE SEQUENCE [LARGE SCALE GENOMIC DNA]</scope>
    <source>
        <strain>NBRC 12016</strain>
    </source>
</reference>
<gene>
    <name evidence="1" type="primary">fabZ</name>
    <name type="ordered locus">CKR_0085</name>
</gene>
<keyword id="KW-0963">Cytoplasm</keyword>
<keyword id="KW-0441">Lipid A biosynthesis</keyword>
<keyword id="KW-0444">Lipid biosynthesis</keyword>
<keyword id="KW-0443">Lipid metabolism</keyword>
<keyword id="KW-0456">Lyase</keyword>